<name>AN32E_XENLA</name>
<reference key="1">
    <citation type="submission" date="2003-01" db="EMBL/GenBank/DDBJ databases">
        <authorList>
            <consortium name="NIH - Xenopus Gene Collection (XGC) project"/>
        </authorList>
    </citation>
    <scope>NUCLEOTIDE SEQUENCE [LARGE SCALE MRNA]</scope>
    <source>
        <tissue>Embryo</tissue>
    </source>
</reference>
<reference key="2">
    <citation type="journal article" date="1996" name="FEBS Lett.">
        <title>Partial purification and characterization of a protein kinase that is activated by nuclear localization signal peptides.</title>
        <authorList>
            <person name="Kurihara T."/>
            <person name="Hori M."/>
            <person name="Takeda H."/>
            <person name="Inoue M."/>
            <person name="Yoneda Y."/>
        </authorList>
    </citation>
    <scope>PHOSPHORYLATION</scope>
</reference>
<reference key="3">
    <citation type="journal article" date="2005" name="Cerebellum">
        <title>The Anp32 family of proteins containing leucine-rich repeats.</title>
        <authorList>
            <person name="Matilla A."/>
            <person name="Radrizzani M."/>
        </authorList>
    </citation>
    <scope>GENE FAMILY</scope>
    <scope>NOMENCLATURE</scope>
</reference>
<organism>
    <name type="scientific">Xenopus laevis</name>
    <name type="common">African clawed frog</name>
    <dbReference type="NCBI Taxonomy" id="8355"/>
    <lineage>
        <taxon>Eukaryota</taxon>
        <taxon>Metazoa</taxon>
        <taxon>Chordata</taxon>
        <taxon>Craniata</taxon>
        <taxon>Vertebrata</taxon>
        <taxon>Euteleostomi</taxon>
        <taxon>Amphibia</taxon>
        <taxon>Batrachia</taxon>
        <taxon>Anura</taxon>
        <taxon>Pipoidea</taxon>
        <taxon>Pipidae</taxon>
        <taxon>Xenopodinae</taxon>
        <taxon>Xenopus</taxon>
        <taxon>Xenopus</taxon>
    </lineage>
</organism>
<keyword id="KW-0143">Chaperone</keyword>
<keyword id="KW-0156">Chromatin regulator</keyword>
<keyword id="KW-0963">Cytoplasm</keyword>
<keyword id="KW-0433">Leucine-rich repeat</keyword>
<keyword id="KW-0539">Nucleus</keyword>
<keyword id="KW-0597">Phosphoprotein</keyword>
<keyword id="KW-1185">Reference proteome</keyword>
<keyword id="KW-0677">Repeat</keyword>
<dbReference type="EMBL" id="BC043985">
    <property type="protein sequence ID" value="AAH43985.1"/>
    <property type="molecule type" value="mRNA"/>
</dbReference>
<dbReference type="RefSeq" id="NP_001080287.1">
    <property type="nucleotide sequence ID" value="NM_001086818.1"/>
</dbReference>
<dbReference type="SMR" id="Q7ZY40"/>
<dbReference type="DNASU" id="379979"/>
<dbReference type="GeneID" id="379979"/>
<dbReference type="KEGG" id="xla:379979"/>
<dbReference type="AGR" id="Xenbase:XB-GENE-991621"/>
<dbReference type="CTD" id="379979"/>
<dbReference type="Xenbase" id="XB-GENE-991621">
    <property type="gene designation" value="anp32e.L"/>
</dbReference>
<dbReference type="OMA" id="LDNCRCV"/>
<dbReference type="OrthoDB" id="2160613at2759"/>
<dbReference type="Proteomes" id="UP000186698">
    <property type="component" value="Chromosome 8L"/>
</dbReference>
<dbReference type="Bgee" id="379979">
    <property type="expression patterns" value="Expressed in gastrula and 19 other cell types or tissues"/>
</dbReference>
<dbReference type="GO" id="GO:0005737">
    <property type="term" value="C:cytoplasm"/>
    <property type="evidence" value="ECO:0007669"/>
    <property type="project" value="UniProtKB-SubCell"/>
</dbReference>
<dbReference type="GO" id="GO:0005634">
    <property type="term" value="C:nucleus"/>
    <property type="evidence" value="ECO:0000318"/>
    <property type="project" value="GO_Central"/>
</dbReference>
<dbReference type="GO" id="GO:0000812">
    <property type="term" value="C:Swr1 complex"/>
    <property type="evidence" value="ECO:0000250"/>
    <property type="project" value="UniProtKB"/>
</dbReference>
<dbReference type="GO" id="GO:0042393">
    <property type="term" value="F:histone binding"/>
    <property type="evidence" value="ECO:0000250"/>
    <property type="project" value="UniProtKB"/>
</dbReference>
<dbReference type="GO" id="GO:0140713">
    <property type="term" value="F:histone chaperone activity"/>
    <property type="evidence" value="ECO:0000250"/>
    <property type="project" value="UniProtKB"/>
</dbReference>
<dbReference type="GO" id="GO:0019212">
    <property type="term" value="F:phosphatase inhibitor activity"/>
    <property type="evidence" value="ECO:0000318"/>
    <property type="project" value="GO_Central"/>
</dbReference>
<dbReference type="GO" id="GO:0006325">
    <property type="term" value="P:chromatin organization"/>
    <property type="evidence" value="ECO:0007669"/>
    <property type="project" value="UniProtKB-KW"/>
</dbReference>
<dbReference type="GO" id="GO:0042981">
    <property type="term" value="P:regulation of apoptotic process"/>
    <property type="evidence" value="ECO:0000318"/>
    <property type="project" value="GO_Central"/>
</dbReference>
<dbReference type="FunFam" id="3.80.10.10:FF:000003">
    <property type="entry name" value="Acidic leucine-rich nuclear phosphoprotein 32 family member A"/>
    <property type="match status" value="1"/>
</dbReference>
<dbReference type="Gene3D" id="3.80.10.10">
    <property type="entry name" value="Ribonuclease Inhibitor"/>
    <property type="match status" value="1"/>
</dbReference>
<dbReference type="InterPro" id="IPR045081">
    <property type="entry name" value="AN32"/>
</dbReference>
<dbReference type="InterPro" id="IPR001611">
    <property type="entry name" value="Leu-rich_rpt"/>
</dbReference>
<dbReference type="InterPro" id="IPR032675">
    <property type="entry name" value="LRR_dom_sf"/>
</dbReference>
<dbReference type="PANTHER" id="PTHR11375">
    <property type="entry name" value="ACIDIC LEUCINE-RICH NUCLEAR PHOSPHOPROTEIN 32"/>
    <property type="match status" value="1"/>
</dbReference>
<dbReference type="PANTHER" id="PTHR11375:SF5">
    <property type="entry name" value="ACIDIC LEUCINE-RICH NUCLEAR PHOSPHOPROTEIN 32 FAMILY MEMBER E"/>
    <property type="match status" value="1"/>
</dbReference>
<dbReference type="Pfam" id="PF14580">
    <property type="entry name" value="LRR_9"/>
    <property type="match status" value="1"/>
</dbReference>
<dbReference type="SUPFAM" id="SSF52058">
    <property type="entry name" value="L domain-like"/>
    <property type="match status" value="1"/>
</dbReference>
<dbReference type="PROSITE" id="PS51450">
    <property type="entry name" value="LRR"/>
    <property type="match status" value="4"/>
</dbReference>
<proteinExistence type="evidence at protein level"/>
<comment type="function">
    <text evidence="1">Histone chaperone that specifically mediates the genome-wide removal of histone H2A.Z/H2AZ1 from the nucleosome: removes H2A.Z/H2AZ1 from its normal sites of deposition, especially from enhancer and insulator regions. Not involved in deposition of H2A.Z/H2AZ1 in the nucleosome. May stabilize the evicted H2A.Z/H2AZ1-H2B dimer, thus shifting the equilibrium towards dissociation and the off-chromatin state. Inhibits activity of protein phosphatase 2A (PP2A). Does not inhibit protein phosphatase 1. May play a role in cerebellar development and synaptogenesis (By similarity).</text>
</comment>
<comment type="subunit">
    <text evidence="1">Component of a SWR1-like complex. Interacts with H2A.Z/H2AZ1 (By similarity).</text>
</comment>
<comment type="subcellular location">
    <subcellularLocation>
        <location evidence="1">Cytoplasm</location>
    </subcellularLocation>
    <subcellularLocation>
        <location evidence="1">Nucleus</location>
    </subcellularLocation>
</comment>
<comment type="domain">
    <text evidence="1">The H2A.Z-interacting domain (ZID) mediates a direct interaction with H2A.Z/H2AZ1.</text>
</comment>
<comment type="PTM">
    <text evidence="3">Phosphorylated. The phosphorylation is nuclear localization signal (NLS)-dependent.</text>
</comment>
<comment type="similarity">
    <text evidence="4">Belongs to the ANP32 family.</text>
</comment>
<accession>Q7ZY40</accession>
<feature type="chain" id="PRO_0000240193" description="Acidic leucine-rich nuclear phosphoprotein 32 family member E">
    <location>
        <begin position="1"/>
        <end position="263"/>
    </location>
</feature>
<feature type="repeat" description="LRR 1">
    <location>
        <begin position="43"/>
        <end position="64"/>
    </location>
</feature>
<feature type="repeat" description="LRR 2">
    <location>
        <begin position="65"/>
        <end position="84"/>
    </location>
</feature>
<feature type="repeat" description="LRR 3">
    <location>
        <begin position="89"/>
        <end position="110"/>
    </location>
</feature>
<feature type="domain" description="LRRCT">
    <location>
        <begin position="123"/>
        <end position="161"/>
    </location>
</feature>
<feature type="region of interest" description="Disordered" evidence="2">
    <location>
        <begin position="146"/>
        <end position="263"/>
    </location>
</feature>
<feature type="region of interest" description="ZID domain" evidence="1">
    <location>
        <begin position="202"/>
        <end position="263"/>
    </location>
</feature>
<feature type="compositionally biased region" description="Acidic residues" evidence="2">
    <location>
        <begin position="148"/>
        <end position="172"/>
    </location>
</feature>
<feature type="compositionally biased region" description="Acidic residues" evidence="2">
    <location>
        <begin position="180"/>
        <end position="203"/>
    </location>
</feature>
<feature type="compositionally biased region" description="Acidic residues" evidence="2">
    <location>
        <begin position="214"/>
        <end position="242"/>
    </location>
</feature>
<gene>
    <name type="primary">anp32e</name>
</gene>
<sequence length="263" mass="30108">MEMKKRISLELRNRSPAEVAELVLDNCRSVDGEIEGLNDSYKELEFLSMANVELKSLSKLPKLPKLRKLELSDNSISGGLDVLTERCPNITYLNLSGNKIKDLSTVEALASLKNLKSLDLFNCEITNLEDYRENIFQRLSQITYLDGFDQEDNEAPDSEEDDDDDDYDDDEEPGPRRYEAEEDEEDEESASDLGEEEEEEEEVGLSYLMKEEIRDEEDDDDYVEDGAEGEEEEEEDEEDEAAAADQGEKRKRDPEDEGDEDED</sequence>
<evidence type="ECO:0000250" key="1"/>
<evidence type="ECO:0000256" key="2">
    <source>
        <dbReference type="SAM" id="MobiDB-lite"/>
    </source>
</evidence>
<evidence type="ECO:0000269" key="3">
    <source>
    </source>
</evidence>
<evidence type="ECO:0000305" key="4"/>
<protein>
    <recommendedName>
        <fullName>Acidic leucine-rich nuclear phosphoprotein 32 family member E</fullName>
    </recommendedName>
</protein>